<comment type="function">
    <text evidence="1">Isomerase that catalyzes the conversion of deoxy-ribose 1-phosphate (dRib-1-P) and ribose 1-phosphate (Rib-1-P) to deoxy-ribose 5-phosphate (dRib-5-P) and ribose 5-phosphate (Rib-5-P), respectively.</text>
</comment>
<comment type="catalytic activity">
    <reaction evidence="1">
        <text>2-deoxy-alpha-D-ribose 1-phosphate = 2-deoxy-D-ribose 5-phosphate</text>
        <dbReference type="Rhea" id="RHEA:27658"/>
        <dbReference type="ChEBI" id="CHEBI:57259"/>
        <dbReference type="ChEBI" id="CHEBI:62877"/>
        <dbReference type="EC" id="5.4.2.7"/>
    </reaction>
</comment>
<comment type="catalytic activity">
    <reaction evidence="1">
        <text>alpha-D-ribose 1-phosphate = D-ribose 5-phosphate</text>
        <dbReference type="Rhea" id="RHEA:18793"/>
        <dbReference type="ChEBI" id="CHEBI:57720"/>
        <dbReference type="ChEBI" id="CHEBI:78346"/>
        <dbReference type="EC" id="5.4.2.7"/>
    </reaction>
</comment>
<comment type="cofactor">
    <cofactor evidence="1">
        <name>Mn(2+)</name>
        <dbReference type="ChEBI" id="CHEBI:29035"/>
    </cofactor>
    <text evidence="1">Binds 2 manganese ions.</text>
</comment>
<comment type="pathway">
    <text evidence="1">Carbohydrate degradation; 2-deoxy-D-ribose 1-phosphate degradation; D-glyceraldehyde 3-phosphate and acetaldehyde from 2-deoxy-alpha-D-ribose 1-phosphate: step 1/2.</text>
</comment>
<comment type="subcellular location">
    <subcellularLocation>
        <location evidence="1">Cytoplasm</location>
    </subcellularLocation>
</comment>
<comment type="PTM">
    <text evidence="2">Phosphorylated.</text>
</comment>
<comment type="similarity">
    <text evidence="1">Belongs to the phosphopentomutase family.</text>
</comment>
<comment type="sequence caution" evidence="3">
    <conflict type="erroneous initiation">
        <sequence resource="EMBL-CDS" id="AAK99536"/>
    </conflict>
</comment>
<organism>
    <name type="scientific">Streptococcus pneumoniae (strain ATCC BAA-255 / R6)</name>
    <dbReference type="NCBI Taxonomy" id="171101"/>
    <lineage>
        <taxon>Bacteria</taxon>
        <taxon>Bacillati</taxon>
        <taxon>Bacillota</taxon>
        <taxon>Bacilli</taxon>
        <taxon>Lactobacillales</taxon>
        <taxon>Streptococcaceae</taxon>
        <taxon>Streptococcus</taxon>
    </lineage>
</organism>
<name>DEOB_STRR6</name>
<proteinExistence type="evidence at protein level"/>
<reference key="1">
    <citation type="journal article" date="2001" name="J. Bacteriol.">
        <title>Genome of the bacterium Streptococcus pneumoniae strain R6.</title>
        <authorList>
            <person name="Hoskins J."/>
            <person name="Alborn W.E. Jr."/>
            <person name="Arnold J."/>
            <person name="Blaszczak L.C."/>
            <person name="Burgett S."/>
            <person name="DeHoff B.S."/>
            <person name="Estrem S.T."/>
            <person name="Fritz L."/>
            <person name="Fu D.-J."/>
            <person name="Fuller W."/>
            <person name="Geringer C."/>
            <person name="Gilmour R."/>
            <person name="Glass J.S."/>
            <person name="Khoja H."/>
            <person name="Kraft A.R."/>
            <person name="Lagace R.E."/>
            <person name="LeBlanc D.J."/>
            <person name="Lee L.N."/>
            <person name="Lefkowitz E.J."/>
            <person name="Lu J."/>
            <person name="Matsushima P."/>
            <person name="McAhren S.M."/>
            <person name="McHenney M."/>
            <person name="McLeaster K."/>
            <person name="Mundy C.W."/>
            <person name="Nicas T.I."/>
            <person name="Norris F.H."/>
            <person name="O'Gara M."/>
            <person name="Peery R.B."/>
            <person name="Robertson G.T."/>
            <person name="Rockey P."/>
            <person name="Sun P.-M."/>
            <person name="Winkler M.E."/>
            <person name="Yang Y."/>
            <person name="Young-Bellido M."/>
            <person name="Zhao G."/>
            <person name="Zook C.A."/>
            <person name="Baltz R.H."/>
            <person name="Jaskunas S.R."/>
            <person name="Rosteck P.R. Jr."/>
            <person name="Skatrud P.L."/>
            <person name="Glass J.I."/>
        </authorList>
    </citation>
    <scope>NUCLEOTIDE SEQUENCE [LARGE SCALE GENOMIC DNA]</scope>
    <source>
        <strain>ATCC BAA-255 / R6</strain>
    </source>
</reference>
<reference key="2">
    <citation type="journal article" date="2005" name="FEBS J.">
        <title>Characterization of a eukaryotic type serine/threonine protein kinase and protein phosphatase of Streptococcus pneumoniae and identification of kinase substrates.</title>
        <authorList>
            <person name="Novakova L."/>
            <person name="Saskova L."/>
            <person name="Pallova P."/>
            <person name="Janecek J."/>
            <person name="Novotna J."/>
            <person name="Ulrych A."/>
            <person name="Echenique J."/>
            <person name="Trombe M.C."/>
            <person name="Branny P."/>
        </authorList>
    </citation>
    <scope>PHOSPHORYLATION</scope>
    <scope>IDENTIFICATION BY MASS SPECTROMETRY</scope>
</reference>
<evidence type="ECO:0000255" key="1">
    <source>
        <dbReference type="HAMAP-Rule" id="MF_00740"/>
    </source>
</evidence>
<evidence type="ECO:0000269" key="2">
    <source>
    </source>
</evidence>
<evidence type="ECO:0000305" key="3"/>
<gene>
    <name evidence="1" type="primary">deoB</name>
    <name type="ordered locus">spr0732</name>
</gene>
<protein>
    <recommendedName>
        <fullName evidence="1">Phosphopentomutase</fullName>
        <ecNumber evidence="1">5.4.2.7</ecNumber>
    </recommendedName>
    <alternativeName>
        <fullName evidence="1">Phosphodeoxyribomutase</fullName>
    </alternativeName>
</protein>
<sequence length="403" mass="44155">MSKFNRIHLVVLDSVGIGAAPDANNFVNAGVPDGASDTLGHISKTVGLNVPNMAKIGLGNIPRETPLKTVAAESNPTGYATKLEEVSLGKDTMTGHWEIMGLNITEPFDTFWNGFPEEILTKIEEFSGRKVIRETNKPYSGTAVIYDFGPRQMETGELIIYTSADPVLQIAAHEDIIPLDELYRICEYARSITLERPALLGRIIARPYVGEPGNFTRTANRRDLAVSPFSPTVLDKLNEAGIDTYAVGKINDIFNGAGINHDMGHNKSNSHGIDTLLKTMGLAEFEKGFSFTNLVDFDALYGHRRNAHGYRDCLHEFDERLPEIIAAMRENDLLLITADHGNDPTYAGTDHTREYIPLLAYSPAFKGNGLIPVGHFADISATVADNFGVETAMIGESFLDKLV</sequence>
<dbReference type="EC" id="5.4.2.7" evidence="1"/>
<dbReference type="EMBL" id="AE007317">
    <property type="protein sequence ID" value="AAK99536.1"/>
    <property type="status" value="ALT_INIT"/>
    <property type="molecule type" value="Genomic_DNA"/>
</dbReference>
<dbReference type="PIR" id="D97963">
    <property type="entry name" value="D97963"/>
</dbReference>
<dbReference type="RefSeq" id="NP_358326.1">
    <property type="nucleotide sequence ID" value="NC_003098.1"/>
</dbReference>
<dbReference type="RefSeq" id="WP_000033108.1">
    <property type="nucleotide sequence ID" value="NC_003098.1"/>
</dbReference>
<dbReference type="SMR" id="Q8DQD0"/>
<dbReference type="STRING" id="171101.spr0732"/>
<dbReference type="KEGG" id="spr:spr0732"/>
<dbReference type="PATRIC" id="fig|171101.6.peg.811"/>
<dbReference type="eggNOG" id="COG1015">
    <property type="taxonomic scope" value="Bacteria"/>
</dbReference>
<dbReference type="HOGENOM" id="CLU_053861_0_0_9"/>
<dbReference type="UniPathway" id="UPA00002">
    <property type="reaction ID" value="UER00467"/>
</dbReference>
<dbReference type="Proteomes" id="UP000000586">
    <property type="component" value="Chromosome"/>
</dbReference>
<dbReference type="GO" id="GO:0005829">
    <property type="term" value="C:cytosol"/>
    <property type="evidence" value="ECO:0000318"/>
    <property type="project" value="GO_Central"/>
</dbReference>
<dbReference type="GO" id="GO:0000287">
    <property type="term" value="F:magnesium ion binding"/>
    <property type="evidence" value="ECO:0007669"/>
    <property type="project" value="InterPro"/>
</dbReference>
<dbReference type="GO" id="GO:0030145">
    <property type="term" value="F:manganese ion binding"/>
    <property type="evidence" value="ECO:0007669"/>
    <property type="project" value="UniProtKB-UniRule"/>
</dbReference>
<dbReference type="GO" id="GO:0008973">
    <property type="term" value="F:phosphopentomutase activity"/>
    <property type="evidence" value="ECO:0000318"/>
    <property type="project" value="GO_Central"/>
</dbReference>
<dbReference type="GO" id="GO:0006018">
    <property type="term" value="P:2-deoxyribose 1-phosphate catabolic process"/>
    <property type="evidence" value="ECO:0007669"/>
    <property type="project" value="UniProtKB-UniRule"/>
</dbReference>
<dbReference type="GO" id="GO:0006015">
    <property type="term" value="P:5-phosphoribose 1-diphosphate biosynthetic process"/>
    <property type="evidence" value="ECO:0007669"/>
    <property type="project" value="UniProtKB-UniPathway"/>
</dbReference>
<dbReference type="GO" id="GO:0043094">
    <property type="term" value="P:metabolic compound salvage"/>
    <property type="evidence" value="ECO:0007669"/>
    <property type="project" value="InterPro"/>
</dbReference>
<dbReference type="GO" id="GO:0009117">
    <property type="term" value="P:nucleotide metabolic process"/>
    <property type="evidence" value="ECO:0007669"/>
    <property type="project" value="InterPro"/>
</dbReference>
<dbReference type="CDD" id="cd16009">
    <property type="entry name" value="PPM"/>
    <property type="match status" value="1"/>
</dbReference>
<dbReference type="FunFam" id="3.30.70.1250:FF:000001">
    <property type="entry name" value="Phosphopentomutase"/>
    <property type="match status" value="1"/>
</dbReference>
<dbReference type="Gene3D" id="3.40.720.10">
    <property type="entry name" value="Alkaline Phosphatase, subunit A"/>
    <property type="match status" value="1"/>
</dbReference>
<dbReference type="Gene3D" id="3.30.70.1250">
    <property type="entry name" value="Phosphopentomutase"/>
    <property type="match status" value="1"/>
</dbReference>
<dbReference type="HAMAP" id="MF_00740">
    <property type="entry name" value="Phosphopentomut"/>
    <property type="match status" value="1"/>
</dbReference>
<dbReference type="InterPro" id="IPR017850">
    <property type="entry name" value="Alkaline_phosphatase_core_sf"/>
</dbReference>
<dbReference type="InterPro" id="IPR010045">
    <property type="entry name" value="DeoB"/>
</dbReference>
<dbReference type="InterPro" id="IPR006124">
    <property type="entry name" value="Metalloenzyme"/>
</dbReference>
<dbReference type="InterPro" id="IPR024052">
    <property type="entry name" value="Phosphopentomutase_DeoB_cap_sf"/>
</dbReference>
<dbReference type="NCBIfam" id="TIGR01696">
    <property type="entry name" value="deoB"/>
    <property type="match status" value="1"/>
</dbReference>
<dbReference type="NCBIfam" id="NF003766">
    <property type="entry name" value="PRK05362.1"/>
    <property type="match status" value="1"/>
</dbReference>
<dbReference type="PANTHER" id="PTHR21110">
    <property type="entry name" value="PHOSPHOPENTOMUTASE"/>
    <property type="match status" value="1"/>
</dbReference>
<dbReference type="PANTHER" id="PTHR21110:SF0">
    <property type="entry name" value="PHOSPHOPENTOMUTASE"/>
    <property type="match status" value="1"/>
</dbReference>
<dbReference type="Pfam" id="PF01676">
    <property type="entry name" value="Metalloenzyme"/>
    <property type="match status" value="1"/>
</dbReference>
<dbReference type="PIRSF" id="PIRSF001491">
    <property type="entry name" value="Ppentomutase"/>
    <property type="match status" value="1"/>
</dbReference>
<dbReference type="SUPFAM" id="SSF53649">
    <property type="entry name" value="Alkaline phosphatase-like"/>
    <property type="match status" value="1"/>
</dbReference>
<dbReference type="SUPFAM" id="SSF143856">
    <property type="entry name" value="DeoB insert domain-like"/>
    <property type="match status" value="1"/>
</dbReference>
<accession>Q8DQD0</accession>
<keyword id="KW-0963">Cytoplasm</keyword>
<keyword id="KW-0413">Isomerase</keyword>
<keyword id="KW-0464">Manganese</keyword>
<keyword id="KW-0479">Metal-binding</keyword>
<keyword id="KW-0597">Phosphoprotein</keyword>
<keyword id="KW-1185">Reference proteome</keyword>
<feature type="chain" id="PRO_0000199853" description="Phosphopentomutase">
    <location>
        <begin position="1"/>
        <end position="403"/>
    </location>
</feature>
<feature type="binding site" evidence="1">
    <location>
        <position position="13"/>
    </location>
    <ligand>
        <name>Mn(2+)</name>
        <dbReference type="ChEBI" id="CHEBI:29035"/>
        <label>1</label>
    </ligand>
</feature>
<feature type="binding site" evidence="1">
    <location>
        <position position="298"/>
    </location>
    <ligand>
        <name>Mn(2+)</name>
        <dbReference type="ChEBI" id="CHEBI:29035"/>
        <label>2</label>
    </ligand>
</feature>
<feature type="binding site" evidence="1">
    <location>
        <position position="303"/>
    </location>
    <ligand>
        <name>Mn(2+)</name>
        <dbReference type="ChEBI" id="CHEBI:29035"/>
        <label>2</label>
    </ligand>
</feature>
<feature type="binding site" evidence="1">
    <location>
        <position position="339"/>
    </location>
    <ligand>
        <name>Mn(2+)</name>
        <dbReference type="ChEBI" id="CHEBI:29035"/>
        <label>1</label>
    </ligand>
</feature>
<feature type="binding site" evidence="1">
    <location>
        <position position="340"/>
    </location>
    <ligand>
        <name>Mn(2+)</name>
        <dbReference type="ChEBI" id="CHEBI:29035"/>
        <label>1</label>
    </ligand>
</feature>
<feature type="binding site" evidence="1">
    <location>
        <position position="351"/>
    </location>
    <ligand>
        <name>Mn(2+)</name>
        <dbReference type="ChEBI" id="CHEBI:29035"/>
        <label>2</label>
    </ligand>
</feature>